<accession>C3MKT6</accession>
<gene>
    <name evidence="1" type="primary">ogt</name>
    <name type="ordered locus">LS215_0308</name>
</gene>
<name>OGT_SACI2</name>
<evidence type="ECO:0000255" key="1">
    <source>
        <dbReference type="HAMAP-Rule" id="MF_00772"/>
    </source>
</evidence>
<comment type="function">
    <text evidence="1">Involved in the cellular defense against the biological effects of O6-methylguanine (O6-MeG) and O4-methylthymine (O4-MeT) in DNA. Repairs the methylated nucleobase in DNA by stoichiometrically transferring the methyl group to a cysteine residue in the enzyme. This is a suicide reaction: the enzyme is irreversibly inactivated.</text>
</comment>
<comment type="catalytic activity">
    <reaction evidence="1">
        <text>a 6-O-methyl-2'-deoxyguanosine in DNA + L-cysteinyl-[protein] = S-methyl-L-cysteinyl-[protein] + a 2'-deoxyguanosine in DNA</text>
        <dbReference type="Rhea" id="RHEA:24000"/>
        <dbReference type="Rhea" id="RHEA-COMP:10131"/>
        <dbReference type="Rhea" id="RHEA-COMP:10132"/>
        <dbReference type="Rhea" id="RHEA-COMP:11367"/>
        <dbReference type="Rhea" id="RHEA-COMP:11368"/>
        <dbReference type="ChEBI" id="CHEBI:29950"/>
        <dbReference type="ChEBI" id="CHEBI:82612"/>
        <dbReference type="ChEBI" id="CHEBI:85445"/>
        <dbReference type="ChEBI" id="CHEBI:85448"/>
        <dbReference type="EC" id="2.1.1.63"/>
    </reaction>
</comment>
<comment type="catalytic activity">
    <reaction evidence="1">
        <text>a 4-O-methyl-thymidine in DNA + L-cysteinyl-[protein] = a thymidine in DNA + S-methyl-L-cysteinyl-[protein]</text>
        <dbReference type="Rhea" id="RHEA:53428"/>
        <dbReference type="Rhea" id="RHEA-COMP:10131"/>
        <dbReference type="Rhea" id="RHEA-COMP:10132"/>
        <dbReference type="Rhea" id="RHEA-COMP:13555"/>
        <dbReference type="Rhea" id="RHEA-COMP:13556"/>
        <dbReference type="ChEBI" id="CHEBI:29950"/>
        <dbReference type="ChEBI" id="CHEBI:82612"/>
        <dbReference type="ChEBI" id="CHEBI:137386"/>
        <dbReference type="ChEBI" id="CHEBI:137387"/>
        <dbReference type="EC" id="2.1.1.63"/>
    </reaction>
</comment>
<comment type="subcellular location">
    <subcellularLocation>
        <location evidence="1">Cytoplasm</location>
    </subcellularLocation>
</comment>
<comment type="miscellaneous">
    <text>This enzyme catalyzes only one turnover and therefore is not strictly catalytic. According to one definition, an enzyme is a biocatalyst that acts repeatedly and over many reaction cycles.</text>
</comment>
<comment type="similarity">
    <text evidence="1">Belongs to the MGMT family.</text>
</comment>
<keyword id="KW-0963">Cytoplasm</keyword>
<keyword id="KW-0227">DNA damage</keyword>
<keyword id="KW-0234">DNA repair</keyword>
<keyword id="KW-0489">Methyltransferase</keyword>
<keyword id="KW-0808">Transferase</keyword>
<feature type="chain" id="PRO_1000212903" description="Methylated-DNA--protein-cysteine methyltransferase">
    <location>
        <begin position="1"/>
        <end position="151"/>
    </location>
</feature>
<feature type="active site" description="Nucleophile; methyl group acceptor" evidence="1">
    <location>
        <position position="119"/>
    </location>
</feature>
<dbReference type="EC" id="2.1.1.63" evidence="1"/>
<dbReference type="EMBL" id="CP001399">
    <property type="protein sequence ID" value="ACP34461.1"/>
    <property type="molecule type" value="Genomic_DNA"/>
</dbReference>
<dbReference type="RefSeq" id="WP_010923891.1">
    <property type="nucleotide sequence ID" value="NC_012589.1"/>
</dbReference>
<dbReference type="SMR" id="C3MKT6"/>
<dbReference type="KEGG" id="sis:LS215_0308"/>
<dbReference type="HOGENOM" id="CLU_000445_52_2_2"/>
<dbReference type="OrthoDB" id="372118at2157"/>
<dbReference type="Proteomes" id="UP000001747">
    <property type="component" value="Chromosome"/>
</dbReference>
<dbReference type="GO" id="GO:0005737">
    <property type="term" value="C:cytoplasm"/>
    <property type="evidence" value="ECO:0007669"/>
    <property type="project" value="UniProtKB-SubCell"/>
</dbReference>
<dbReference type="GO" id="GO:0003908">
    <property type="term" value="F:methylated-DNA-[protein]-cysteine S-methyltransferase activity"/>
    <property type="evidence" value="ECO:0007669"/>
    <property type="project" value="UniProtKB-UniRule"/>
</dbReference>
<dbReference type="GO" id="GO:0006307">
    <property type="term" value="P:DNA alkylation repair"/>
    <property type="evidence" value="ECO:0007669"/>
    <property type="project" value="UniProtKB-UniRule"/>
</dbReference>
<dbReference type="GO" id="GO:0032259">
    <property type="term" value="P:methylation"/>
    <property type="evidence" value="ECO:0007669"/>
    <property type="project" value="UniProtKB-KW"/>
</dbReference>
<dbReference type="CDD" id="cd06445">
    <property type="entry name" value="ATase"/>
    <property type="match status" value="1"/>
</dbReference>
<dbReference type="FunFam" id="1.10.10.10:FF:000214">
    <property type="entry name" value="Methylated-DNA--protein-cysteine methyltransferase"/>
    <property type="match status" value="1"/>
</dbReference>
<dbReference type="Gene3D" id="3.30.160.70">
    <property type="entry name" value="Methylated DNA-protein cysteine methyltransferase domain"/>
    <property type="match status" value="1"/>
</dbReference>
<dbReference type="Gene3D" id="1.10.10.10">
    <property type="entry name" value="Winged helix-like DNA-binding domain superfamily/Winged helix DNA-binding domain"/>
    <property type="match status" value="1"/>
</dbReference>
<dbReference type="HAMAP" id="MF_00772">
    <property type="entry name" value="OGT"/>
    <property type="match status" value="1"/>
</dbReference>
<dbReference type="InterPro" id="IPR001497">
    <property type="entry name" value="MethylDNA_cys_MeTrfase_AS"/>
</dbReference>
<dbReference type="InterPro" id="IPR014048">
    <property type="entry name" value="MethylDNA_cys_MeTrfase_DNA-bd"/>
</dbReference>
<dbReference type="InterPro" id="IPR036217">
    <property type="entry name" value="MethylDNA_cys_MeTrfase_DNAb"/>
</dbReference>
<dbReference type="InterPro" id="IPR008332">
    <property type="entry name" value="MethylG_MeTrfase_N"/>
</dbReference>
<dbReference type="InterPro" id="IPR023546">
    <property type="entry name" value="MGMT"/>
</dbReference>
<dbReference type="InterPro" id="IPR036631">
    <property type="entry name" value="MGMT_N_sf"/>
</dbReference>
<dbReference type="InterPro" id="IPR036388">
    <property type="entry name" value="WH-like_DNA-bd_sf"/>
</dbReference>
<dbReference type="NCBIfam" id="TIGR00589">
    <property type="entry name" value="ogt"/>
    <property type="match status" value="1"/>
</dbReference>
<dbReference type="PANTHER" id="PTHR10815">
    <property type="entry name" value="METHYLATED-DNA--PROTEIN-CYSTEINE METHYLTRANSFERASE"/>
    <property type="match status" value="1"/>
</dbReference>
<dbReference type="PANTHER" id="PTHR10815:SF13">
    <property type="entry name" value="METHYLATED-DNA--PROTEIN-CYSTEINE METHYLTRANSFERASE"/>
    <property type="match status" value="1"/>
</dbReference>
<dbReference type="Pfam" id="PF01035">
    <property type="entry name" value="DNA_binding_1"/>
    <property type="match status" value="1"/>
</dbReference>
<dbReference type="Pfam" id="PF02870">
    <property type="entry name" value="Methyltransf_1N"/>
    <property type="match status" value="1"/>
</dbReference>
<dbReference type="SUPFAM" id="SSF53155">
    <property type="entry name" value="Methylated DNA-protein cysteine methyltransferase domain"/>
    <property type="match status" value="1"/>
</dbReference>
<dbReference type="SUPFAM" id="SSF46767">
    <property type="entry name" value="Methylated DNA-protein cysteine methyltransferase, C-terminal domain"/>
    <property type="match status" value="1"/>
</dbReference>
<dbReference type="PROSITE" id="PS00374">
    <property type="entry name" value="MGMT"/>
    <property type="match status" value="1"/>
</dbReference>
<sequence>MLVYGLYKSPLGYITVAKDDKGFIMLDFCDCVEGNSRDDSSFTEFFHKLDLYFEGKPINLREPINLKTYPFRLSVFKEVMKIPWGKVMTYKQIADSLGTSPRAVGMALSKNPILLIIPCHRVIAENGIGGYSRGVKLKRALLELEGVKIPE</sequence>
<reference key="1">
    <citation type="journal article" date="2009" name="Proc. Natl. Acad. Sci. U.S.A.">
        <title>Biogeography of the Sulfolobus islandicus pan-genome.</title>
        <authorList>
            <person name="Reno M.L."/>
            <person name="Held N.L."/>
            <person name="Fields C.J."/>
            <person name="Burke P.V."/>
            <person name="Whitaker R.J."/>
        </authorList>
    </citation>
    <scope>NUCLEOTIDE SEQUENCE [LARGE SCALE GENOMIC DNA]</scope>
    <source>
        <strain>L.S.2.15 / Lassen #1</strain>
    </source>
</reference>
<organism>
    <name type="scientific">Saccharolobus islandicus (strain L.S.2.15 / Lassen #1)</name>
    <name type="common">Sulfolobus islandicus</name>
    <dbReference type="NCBI Taxonomy" id="429572"/>
    <lineage>
        <taxon>Archaea</taxon>
        <taxon>Thermoproteota</taxon>
        <taxon>Thermoprotei</taxon>
        <taxon>Sulfolobales</taxon>
        <taxon>Sulfolobaceae</taxon>
        <taxon>Saccharolobus</taxon>
    </lineage>
</organism>
<protein>
    <recommendedName>
        <fullName evidence="1">Methylated-DNA--protein-cysteine methyltransferase</fullName>
        <ecNumber evidence="1">2.1.1.63</ecNumber>
    </recommendedName>
    <alternativeName>
        <fullName evidence="1">6-O-methylguanine-DNA methyltransferase</fullName>
        <shortName evidence="1">MGMT</shortName>
    </alternativeName>
    <alternativeName>
        <fullName evidence="1">O-6-methylguanine-DNA-alkyltransferase</fullName>
    </alternativeName>
</protein>
<proteinExistence type="inferred from homology"/>